<dbReference type="EC" id="2.3.1.129" evidence="1"/>
<dbReference type="EMBL" id="CP000671">
    <property type="protein sequence ID" value="ABQ98694.1"/>
    <property type="molecule type" value="Genomic_DNA"/>
</dbReference>
<dbReference type="SMR" id="A5UD43"/>
<dbReference type="KEGG" id="hip:CGSHiEE_06775"/>
<dbReference type="HOGENOM" id="CLU_061249_0_0_6"/>
<dbReference type="UniPathway" id="UPA00359">
    <property type="reaction ID" value="UER00477"/>
</dbReference>
<dbReference type="GO" id="GO:0005737">
    <property type="term" value="C:cytoplasm"/>
    <property type="evidence" value="ECO:0007669"/>
    <property type="project" value="UniProtKB-SubCell"/>
</dbReference>
<dbReference type="GO" id="GO:0016020">
    <property type="term" value="C:membrane"/>
    <property type="evidence" value="ECO:0007669"/>
    <property type="project" value="GOC"/>
</dbReference>
<dbReference type="GO" id="GO:0008780">
    <property type="term" value="F:acyl-[acyl-carrier-protein]-UDP-N-acetylglucosamine O-acyltransferase activity"/>
    <property type="evidence" value="ECO:0007669"/>
    <property type="project" value="UniProtKB-UniRule"/>
</dbReference>
<dbReference type="GO" id="GO:0009245">
    <property type="term" value="P:lipid A biosynthetic process"/>
    <property type="evidence" value="ECO:0007669"/>
    <property type="project" value="UniProtKB-UniRule"/>
</dbReference>
<dbReference type="CDD" id="cd03351">
    <property type="entry name" value="LbH_UDP-GlcNAc_AT"/>
    <property type="match status" value="1"/>
</dbReference>
<dbReference type="FunFam" id="2.160.10.10:FF:000003">
    <property type="entry name" value="Acyl-[acyl-carrier-protein]--UDP-N-acetylglucosamine O-acyltransferase"/>
    <property type="match status" value="1"/>
</dbReference>
<dbReference type="Gene3D" id="2.160.10.10">
    <property type="entry name" value="Hexapeptide repeat proteins"/>
    <property type="match status" value="1"/>
</dbReference>
<dbReference type="Gene3D" id="1.20.1180.10">
    <property type="entry name" value="Udp N-acetylglucosamine O-acyltransferase, C-terminal domain"/>
    <property type="match status" value="1"/>
</dbReference>
<dbReference type="HAMAP" id="MF_00387">
    <property type="entry name" value="LpxA"/>
    <property type="match status" value="1"/>
</dbReference>
<dbReference type="InterPro" id="IPR029098">
    <property type="entry name" value="Acetyltransf_C"/>
</dbReference>
<dbReference type="InterPro" id="IPR037157">
    <property type="entry name" value="Acetyltransf_C_sf"/>
</dbReference>
<dbReference type="InterPro" id="IPR001451">
    <property type="entry name" value="Hexapep"/>
</dbReference>
<dbReference type="InterPro" id="IPR018357">
    <property type="entry name" value="Hexapep_transf_CS"/>
</dbReference>
<dbReference type="InterPro" id="IPR010137">
    <property type="entry name" value="Lipid_A_LpxA"/>
</dbReference>
<dbReference type="InterPro" id="IPR011004">
    <property type="entry name" value="Trimer_LpxA-like_sf"/>
</dbReference>
<dbReference type="NCBIfam" id="TIGR01852">
    <property type="entry name" value="lipid_A_lpxA"/>
    <property type="match status" value="1"/>
</dbReference>
<dbReference type="NCBIfam" id="NF003657">
    <property type="entry name" value="PRK05289.1"/>
    <property type="match status" value="1"/>
</dbReference>
<dbReference type="PANTHER" id="PTHR43480">
    <property type="entry name" value="ACYL-[ACYL-CARRIER-PROTEIN]--UDP-N-ACETYLGLUCOSAMINE O-ACYLTRANSFERASE"/>
    <property type="match status" value="1"/>
</dbReference>
<dbReference type="PANTHER" id="PTHR43480:SF1">
    <property type="entry name" value="ACYL-[ACYL-CARRIER-PROTEIN]--UDP-N-ACETYLGLUCOSAMINE O-ACYLTRANSFERASE, MITOCHONDRIAL-RELATED"/>
    <property type="match status" value="1"/>
</dbReference>
<dbReference type="Pfam" id="PF13720">
    <property type="entry name" value="Acetyltransf_11"/>
    <property type="match status" value="1"/>
</dbReference>
<dbReference type="Pfam" id="PF00132">
    <property type="entry name" value="Hexapep"/>
    <property type="match status" value="2"/>
</dbReference>
<dbReference type="PIRSF" id="PIRSF000456">
    <property type="entry name" value="UDP-GlcNAc_acltr"/>
    <property type="match status" value="1"/>
</dbReference>
<dbReference type="SUPFAM" id="SSF51161">
    <property type="entry name" value="Trimeric LpxA-like enzymes"/>
    <property type="match status" value="1"/>
</dbReference>
<dbReference type="PROSITE" id="PS00101">
    <property type="entry name" value="HEXAPEP_TRANSFERASES"/>
    <property type="match status" value="2"/>
</dbReference>
<sequence length="262" mass="28699">MIHPSAKIHPTALIEEGAVIGEDVFIGPFCIVEGTVEIKARTVLKSHVVVRGDTVIGEDNEIYQFTSIGEVNQDLKYKGEATKTIIGNSNKIREHVTIHRGTIQGCGVTAIGNNNLLMINVHVAHDCQIKNNCILANNATLAGHVELDDFVIVGGMSAIHQFVIVGAHVMLGGGSMVSQDVPPYVMAQGNHARPFGVNLEGLKRRGFDKPTMHAIRNIYKMIYRSGKTLEEVLPEIEQIAETDSAISFFVEFFKRSTRGIIR</sequence>
<organism>
    <name type="scientific">Haemophilus influenzae (strain PittEE)</name>
    <dbReference type="NCBI Taxonomy" id="374930"/>
    <lineage>
        <taxon>Bacteria</taxon>
        <taxon>Pseudomonadati</taxon>
        <taxon>Pseudomonadota</taxon>
        <taxon>Gammaproteobacteria</taxon>
        <taxon>Pasteurellales</taxon>
        <taxon>Pasteurellaceae</taxon>
        <taxon>Haemophilus</taxon>
    </lineage>
</organism>
<proteinExistence type="inferred from homology"/>
<name>LPXA_HAEIE</name>
<comment type="function">
    <text evidence="1">Involved in the biosynthesis of lipid A, a phosphorylated glycolipid that anchors the lipopolysaccharide to the outer membrane of the cell.</text>
</comment>
<comment type="catalytic activity">
    <reaction evidence="1">
        <text>a (3R)-hydroxyacyl-[ACP] + UDP-N-acetyl-alpha-D-glucosamine = a UDP-3-O-[(3R)-3-hydroxyacyl]-N-acetyl-alpha-D-glucosamine + holo-[ACP]</text>
        <dbReference type="Rhea" id="RHEA:67812"/>
        <dbReference type="Rhea" id="RHEA-COMP:9685"/>
        <dbReference type="Rhea" id="RHEA-COMP:9945"/>
        <dbReference type="ChEBI" id="CHEBI:57705"/>
        <dbReference type="ChEBI" id="CHEBI:64479"/>
        <dbReference type="ChEBI" id="CHEBI:78827"/>
        <dbReference type="ChEBI" id="CHEBI:173225"/>
        <dbReference type="EC" id="2.3.1.129"/>
    </reaction>
</comment>
<comment type="pathway">
    <text evidence="1">Glycolipid biosynthesis; lipid IV(A) biosynthesis; lipid IV(A) from (3R)-3-hydroxytetradecanoyl-[acyl-carrier-protein] and UDP-N-acetyl-alpha-D-glucosamine: step 1/6.</text>
</comment>
<comment type="subunit">
    <text evidence="1">Homotrimer.</text>
</comment>
<comment type="subcellular location">
    <subcellularLocation>
        <location evidence="1">Cytoplasm</location>
    </subcellularLocation>
</comment>
<comment type="similarity">
    <text evidence="1">Belongs to the transferase hexapeptide repeat family. LpxA subfamily.</text>
</comment>
<feature type="chain" id="PRO_1000013166" description="Acyl-[acyl-carrier-protein]--UDP-N-acetylglucosamine O-acyltransferase">
    <location>
        <begin position="1"/>
        <end position="262"/>
    </location>
</feature>
<gene>
    <name evidence="1" type="primary">lpxA</name>
    <name type="ordered locus">CGSHiEE_06775</name>
</gene>
<protein>
    <recommendedName>
        <fullName evidence="1">Acyl-[acyl-carrier-protein]--UDP-N-acetylglucosamine O-acyltransferase</fullName>
        <shortName evidence="1">UDP-N-acetylglucosamine acyltransferase</shortName>
        <ecNumber evidence="1">2.3.1.129</ecNumber>
    </recommendedName>
</protein>
<evidence type="ECO:0000255" key="1">
    <source>
        <dbReference type="HAMAP-Rule" id="MF_00387"/>
    </source>
</evidence>
<accession>A5UD43</accession>
<keyword id="KW-0012">Acyltransferase</keyword>
<keyword id="KW-0963">Cytoplasm</keyword>
<keyword id="KW-0441">Lipid A biosynthesis</keyword>
<keyword id="KW-0444">Lipid biosynthesis</keyword>
<keyword id="KW-0443">Lipid metabolism</keyword>
<keyword id="KW-0677">Repeat</keyword>
<keyword id="KW-0808">Transferase</keyword>
<reference key="1">
    <citation type="journal article" date="2007" name="Genome Biol.">
        <title>Characterization and modeling of the Haemophilus influenzae core and supragenomes based on the complete genomic sequences of Rd and 12 clinical nontypeable strains.</title>
        <authorList>
            <person name="Hogg J.S."/>
            <person name="Hu F.Z."/>
            <person name="Janto B."/>
            <person name="Boissy R."/>
            <person name="Hayes J."/>
            <person name="Keefe R."/>
            <person name="Post J.C."/>
            <person name="Ehrlich G.D."/>
        </authorList>
    </citation>
    <scope>NUCLEOTIDE SEQUENCE [LARGE SCALE GENOMIC DNA]</scope>
    <source>
        <strain>PittEE</strain>
    </source>
</reference>